<comment type="function">
    <text evidence="1">Involved in the biosynthesis of isopentenyl diphosphate (IPP) and dimethylallyl diphosphate (DMAPP), two major building blocks of isoprenoid compounds. Catalyzes the conversion of 4-diphosphocytidyl-2-C-methyl-D-erythritol 2-phosphate (CDP-ME2P) to 2-C-methyl-D-erythritol 2,4-cyclodiphosphate (ME-CPP) with a corresponding release of cytidine 5-monophosphate (CMP).</text>
</comment>
<comment type="catalytic activity">
    <reaction evidence="1">
        <text>4-CDP-2-C-methyl-D-erythritol 2-phosphate = 2-C-methyl-D-erythritol 2,4-cyclic diphosphate + CMP</text>
        <dbReference type="Rhea" id="RHEA:23864"/>
        <dbReference type="ChEBI" id="CHEBI:57919"/>
        <dbReference type="ChEBI" id="CHEBI:58483"/>
        <dbReference type="ChEBI" id="CHEBI:60377"/>
        <dbReference type="EC" id="4.6.1.12"/>
    </reaction>
</comment>
<comment type="cofactor">
    <cofactor evidence="1">
        <name>a divalent metal cation</name>
        <dbReference type="ChEBI" id="CHEBI:60240"/>
    </cofactor>
    <text evidence="1">Binds 1 divalent metal cation per subunit.</text>
</comment>
<comment type="pathway">
    <text evidence="1">Isoprenoid biosynthesis; isopentenyl diphosphate biosynthesis via DXP pathway; isopentenyl diphosphate from 1-deoxy-D-xylulose 5-phosphate: step 4/6.</text>
</comment>
<comment type="subunit">
    <text evidence="1">Homotrimer.</text>
</comment>
<comment type="similarity">
    <text evidence="1">Belongs to the IspF family.</text>
</comment>
<keyword id="KW-0414">Isoprene biosynthesis</keyword>
<keyword id="KW-0456">Lyase</keyword>
<keyword id="KW-0479">Metal-binding</keyword>
<keyword id="KW-1185">Reference proteome</keyword>
<feature type="chain" id="PRO_1000202874" description="2-C-methyl-D-erythritol 2,4-cyclodiphosphate synthase">
    <location>
        <begin position="1"/>
        <end position="162"/>
    </location>
</feature>
<feature type="binding site" evidence="1">
    <location>
        <begin position="14"/>
        <end position="16"/>
    </location>
    <ligand>
        <name>4-CDP-2-C-methyl-D-erythritol 2-phosphate</name>
        <dbReference type="ChEBI" id="CHEBI:57919"/>
    </ligand>
</feature>
<feature type="binding site" evidence="1">
    <location>
        <position position="14"/>
    </location>
    <ligand>
        <name>a divalent metal cation</name>
        <dbReference type="ChEBI" id="CHEBI:60240"/>
    </ligand>
</feature>
<feature type="binding site" evidence="1">
    <location>
        <position position="16"/>
    </location>
    <ligand>
        <name>a divalent metal cation</name>
        <dbReference type="ChEBI" id="CHEBI:60240"/>
    </ligand>
</feature>
<feature type="binding site" evidence="1">
    <location>
        <begin position="40"/>
        <end position="41"/>
    </location>
    <ligand>
        <name>4-CDP-2-C-methyl-D-erythritol 2-phosphate</name>
        <dbReference type="ChEBI" id="CHEBI:57919"/>
    </ligand>
</feature>
<feature type="binding site" evidence="1">
    <location>
        <position position="48"/>
    </location>
    <ligand>
        <name>a divalent metal cation</name>
        <dbReference type="ChEBI" id="CHEBI:60240"/>
    </ligand>
</feature>
<feature type="binding site" evidence="1">
    <location>
        <begin position="62"/>
        <end position="64"/>
    </location>
    <ligand>
        <name>4-CDP-2-C-methyl-D-erythritol 2-phosphate</name>
        <dbReference type="ChEBI" id="CHEBI:57919"/>
    </ligand>
</feature>
<feature type="binding site" evidence="1">
    <location>
        <begin position="135"/>
        <end position="138"/>
    </location>
    <ligand>
        <name>4-CDP-2-C-methyl-D-erythritol 2-phosphate</name>
        <dbReference type="ChEBI" id="CHEBI:57919"/>
    </ligand>
</feature>
<feature type="binding site" evidence="1">
    <location>
        <position position="142"/>
    </location>
    <ligand>
        <name>4-CDP-2-C-methyl-D-erythritol 2-phosphate</name>
        <dbReference type="ChEBI" id="CHEBI:57919"/>
    </ligand>
</feature>
<feature type="binding site" evidence="1">
    <location>
        <position position="145"/>
    </location>
    <ligand>
        <name>4-CDP-2-C-methyl-D-erythritol 2-phosphate</name>
        <dbReference type="ChEBI" id="CHEBI:57919"/>
    </ligand>
</feature>
<feature type="site" description="Transition state stabilizer" evidence="1">
    <location>
        <position position="40"/>
    </location>
</feature>
<feature type="site" description="Transition state stabilizer" evidence="1">
    <location>
        <position position="136"/>
    </location>
</feature>
<name>ISPF_CORU7</name>
<organism>
    <name type="scientific">Corynebacterium urealyticum (strain ATCC 43042 / DSM 7109)</name>
    <dbReference type="NCBI Taxonomy" id="504474"/>
    <lineage>
        <taxon>Bacteria</taxon>
        <taxon>Bacillati</taxon>
        <taxon>Actinomycetota</taxon>
        <taxon>Actinomycetes</taxon>
        <taxon>Mycobacteriales</taxon>
        <taxon>Corynebacteriaceae</taxon>
        <taxon>Corynebacterium</taxon>
    </lineage>
</organism>
<reference key="1">
    <citation type="journal article" date="2008" name="J. Biotechnol.">
        <title>The lifestyle of Corynebacterium urealyticum derived from its complete genome sequence established by pyrosequencing.</title>
        <authorList>
            <person name="Tauch A."/>
            <person name="Trost E."/>
            <person name="Tilker A."/>
            <person name="Ludewig U."/>
            <person name="Schneiker S."/>
            <person name="Goesmann A."/>
            <person name="Arnold W."/>
            <person name="Bekel T."/>
            <person name="Brinkrolf K."/>
            <person name="Brune I."/>
            <person name="Goetker S."/>
            <person name="Kalinowski J."/>
            <person name="Kamp P.-B."/>
            <person name="Lobo F.P."/>
            <person name="Viehoever P."/>
            <person name="Weisshaar B."/>
            <person name="Soriano F."/>
            <person name="Droege M."/>
            <person name="Puehler A."/>
        </authorList>
    </citation>
    <scope>NUCLEOTIDE SEQUENCE [LARGE SCALE GENOMIC DNA]</scope>
    <source>
        <strain>ATCC 43042 / DSM 7109</strain>
    </source>
</reference>
<sequence>MTQPIIPRVGIASDAHQVEPGKPCWMAGLLFEDADGCEGHSDGDVVSHVIVDALLSASGLGDLGSFVGVGRKEYDGVSGERLITECRQLLAENGFTIGNVAAQMIGNRPKMGPRREEAERRLTELVGAPVSVSATTTDKMGFTGRGEGVAALATAVVWKAGA</sequence>
<evidence type="ECO:0000255" key="1">
    <source>
        <dbReference type="HAMAP-Rule" id="MF_00107"/>
    </source>
</evidence>
<proteinExistence type="inferred from homology"/>
<dbReference type="EC" id="4.6.1.12" evidence="1"/>
<dbReference type="EMBL" id="AM942444">
    <property type="protein sequence ID" value="CAQ05634.1"/>
    <property type="molecule type" value="Genomic_DNA"/>
</dbReference>
<dbReference type="RefSeq" id="WP_012360910.1">
    <property type="nucleotide sequence ID" value="NC_010545.1"/>
</dbReference>
<dbReference type="SMR" id="B1VIQ0"/>
<dbReference type="STRING" id="504474.cu1674"/>
<dbReference type="GeneID" id="60604458"/>
<dbReference type="KEGG" id="cur:cu1674"/>
<dbReference type="eggNOG" id="COG0245">
    <property type="taxonomic scope" value="Bacteria"/>
</dbReference>
<dbReference type="HOGENOM" id="CLU_084630_1_0_11"/>
<dbReference type="UniPathway" id="UPA00056">
    <property type="reaction ID" value="UER00095"/>
</dbReference>
<dbReference type="Proteomes" id="UP000001727">
    <property type="component" value="Chromosome"/>
</dbReference>
<dbReference type="GO" id="GO:0008685">
    <property type="term" value="F:2-C-methyl-D-erythritol 2,4-cyclodiphosphate synthase activity"/>
    <property type="evidence" value="ECO:0007669"/>
    <property type="project" value="UniProtKB-UniRule"/>
</dbReference>
<dbReference type="GO" id="GO:0046872">
    <property type="term" value="F:metal ion binding"/>
    <property type="evidence" value="ECO:0007669"/>
    <property type="project" value="UniProtKB-KW"/>
</dbReference>
<dbReference type="GO" id="GO:0019288">
    <property type="term" value="P:isopentenyl diphosphate biosynthetic process, methylerythritol 4-phosphate pathway"/>
    <property type="evidence" value="ECO:0007669"/>
    <property type="project" value="UniProtKB-UniRule"/>
</dbReference>
<dbReference type="GO" id="GO:0016114">
    <property type="term" value="P:terpenoid biosynthetic process"/>
    <property type="evidence" value="ECO:0007669"/>
    <property type="project" value="InterPro"/>
</dbReference>
<dbReference type="CDD" id="cd00554">
    <property type="entry name" value="MECDP_synthase"/>
    <property type="match status" value="1"/>
</dbReference>
<dbReference type="FunFam" id="3.30.1330.50:FF:000003">
    <property type="entry name" value="2-C-methyl-D-erythritol 2,4-cyclodiphosphate synthase"/>
    <property type="match status" value="1"/>
</dbReference>
<dbReference type="Gene3D" id="3.30.1330.50">
    <property type="entry name" value="2-C-methyl-D-erythritol 2,4-cyclodiphosphate synthase"/>
    <property type="match status" value="1"/>
</dbReference>
<dbReference type="HAMAP" id="MF_00107">
    <property type="entry name" value="IspF"/>
    <property type="match status" value="1"/>
</dbReference>
<dbReference type="InterPro" id="IPR003526">
    <property type="entry name" value="MECDP_synthase"/>
</dbReference>
<dbReference type="InterPro" id="IPR036571">
    <property type="entry name" value="MECDP_synthase_sf"/>
</dbReference>
<dbReference type="NCBIfam" id="TIGR00151">
    <property type="entry name" value="ispF"/>
    <property type="match status" value="1"/>
</dbReference>
<dbReference type="PANTHER" id="PTHR43181">
    <property type="entry name" value="2-C-METHYL-D-ERYTHRITOL 2,4-CYCLODIPHOSPHATE SYNTHASE, CHLOROPLASTIC"/>
    <property type="match status" value="1"/>
</dbReference>
<dbReference type="PANTHER" id="PTHR43181:SF1">
    <property type="entry name" value="2-C-METHYL-D-ERYTHRITOL 2,4-CYCLODIPHOSPHATE SYNTHASE, CHLOROPLASTIC"/>
    <property type="match status" value="1"/>
</dbReference>
<dbReference type="Pfam" id="PF02542">
    <property type="entry name" value="YgbB"/>
    <property type="match status" value="1"/>
</dbReference>
<dbReference type="SUPFAM" id="SSF69765">
    <property type="entry name" value="IpsF-like"/>
    <property type="match status" value="1"/>
</dbReference>
<protein>
    <recommendedName>
        <fullName evidence="1">2-C-methyl-D-erythritol 2,4-cyclodiphosphate synthase</fullName>
        <shortName evidence="1">MECDP-synthase</shortName>
        <shortName evidence="1">MECPP-synthase</shortName>
        <shortName evidence="1">MECPS</shortName>
        <ecNumber evidence="1">4.6.1.12</ecNumber>
    </recommendedName>
</protein>
<gene>
    <name evidence="1" type="primary">ispF</name>
    <name type="ordered locus">cu1674</name>
</gene>
<accession>B1VIQ0</accession>